<keyword id="KW-0217">Developmental protein</keyword>
<keyword id="KW-0539">Nucleus</keyword>
<keyword id="KW-1185">Reference proteome</keyword>
<keyword id="KW-0677">Repeat</keyword>
<keyword id="KW-0804">Transcription</keyword>
<keyword id="KW-0805">Transcription regulation</keyword>
<keyword id="KW-0853">WD repeat</keyword>
<reference key="1">
    <citation type="journal article" date="1997" name="Development">
        <title>The Groucho-like transcription factor UNC-37 functions with the neural specificity gene unc-4 to govern motor neuron identity in C. elegans.</title>
        <authorList>
            <person name="Pflugrad A."/>
            <person name="Meir J.Y.-J."/>
            <person name="Barnes T.M."/>
            <person name="Miller D.M. III"/>
        </authorList>
    </citation>
    <scope>NUCLEOTIDE SEQUENCE [MRNA]</scope>
    <scope>FUNCTION</scope>
    <scope>MUTAGENESIS OF HIS-539</scope>
    <source>
        <strain>Bristol N2</strain>
    </source>
</reference>
<reference key="2">
    <citation type="journal article" date="1997" name="Biochem. Mol. Biol. Int.">
        <title>cDNA cloning and genomic organization of enhancer of split groucho gene from nematode Caenorhabditis elegans.</title>
        <authorList>
            <person name="Sharief F.S."/>
            <person name="Tsoi S.C.M."/>
            <person name="Li S.S.-L."/>
        </authorList>
    </citation>
    <scope>NUCLEOTIDE SEQUENCE [GENOMIC DNA / MRNA]</scope>
    <source>
        <strain>Bristol N2</strain>
    </source>
</reference>
<reference key="3">
    <citation type="journal article" date="1998" name="Science">
        <title>Genome sequence of the nematode C. elegans: a platform for investigating biology.</title>
        <authorList>
            <consortium name="The C. elegans sequencing consortium"/>
        </authorList>
    </citation>
    <scope>NUCLEOTIDE SEQUENCE [LARGE SCALE GENOMIC DNA]</scope>
    <source>
        <strain>Bristol N2</strain>
    </source>
</reference>
<reference key="4">
    <citation type="journal article" date="1999" name="Genes Dev.">
        <title>UNC-4/UNC-37-dependent repression of motor neuron-specific genes controls synaptic choice in Caenorhabditis elegans.</title>
        <authorList>
            <person name="Winnier A.R."/>
            <person name="Meir J.Y.-J."/>
            <person name="Ross J.M."/>
            <person name="Tavernarakis N."/>
            <person name="Driscoll M."/>
            <person name="Ishihara T."/>
            <person name="Katsura I."/>
            <person name="Miller D.M. III"/>
        </authorList>
    </citation>
    <scope>FUNCTION</scope>
    <scope>INTERACTION WITH UNC-4</scope>
</reference>
<reference evidence="7" key="5">
    <citation type="journal article" date="2005" name="Dev. Cell">
        <title>The REF-1 family of bHLH transcription factors pattern C. elegans embryos through Notch-dependent and Notch-independent pathways.</title>
        <authorList>
            <person name="Neves A."/>
            <person name="Priess J.R."/>
        </authorList>
    </citation>
    <scope>INTERACTION WITH REF-1</scope>
    <scope>DISRUPTION PHENOTYPE</scope>
</reference>
<reference key="6">
    <citation type="journal article" date="2007" name="Genes Dev.">
        <title>UNC-4 represses CEH-12/HB9 to specify synaptic inputs to VA motor neurons in C. elegans.</title>
        <authorList>
            <person name="Von Stetina S.E."/>
            <person name="Fox R.M."/>
            <person name="Watkins K.L."/>
            <person name="Starich T.A."/>
            <person name="Shaw J.E."/>
            <person name="Miller D.M. III"/>
        </authorList>
    </citation>
    <scope>FUNCTION</scope>
    <scope>MUTAGENESIS OF HIS-539</scope>
</reference>
<reference key="7">
    <citation type="journal article" date="2011" name="PLoS Genet.">
        <title>The Caenorhabditis elegans T-box factor MLS-1 requires Groucho co-repressor interaction for uterine muscle specification.</title>
        <authorList>
            <person name="Miller R.R."/>
            <person name="Okkema P.G."/>
        </authorList>
    </citation>
    <scope>FUNCTION</scope>
    <scope>INTERACTION WITH MLS-1</scope>
    <scope>DISRUPTION PHENOTYPE</scope>
</reference>
<dbReference type="EMBL" id="U89245">
    <property type="protein sequence ID" value="AAB49459.1"/>
    <property type="molecule type" value="mRNA"/>
</dbReference>
<dbReference type="EMBL" id="AF001271">
    <property type="protein sequence ID" value="AAB84234.1"/>
    <property type="molecule type" value="mRNA"/>
</dbReference>
<dbReference type="EMBL" id="AF001272">
    <property type="protein sequence ID" value="AAB84235.1"/>
    <property type="molecule type" value="Genomic_DNA"/>
</dbReference>
<dbReference type="EMBL" id="FO081084">
    <property type="protein sequence ID" value="CCD68992.1"/>
    <property type="molecule type" value="Genomic_DNA"/>
</dbReference>
<dbReference type="PIR" id="T15211">
    <property type="entry name" value="T15211"/>
</dbReference>
<dbReference type="RefSeq" id="NP_491932.1">
    <property type="nucleotide sequence ID" value="NM_059531.9"/>
</dbReference>
<dbReference type="SMR" id="O02482"/>
<dbReference type="BioGRID" id="37842">
    <property type="interactions" value="56"/>
</dbReference>
<dbReference type="DIP" id="DIP-27333N"/>
<dbReference type="FunCoup" id="O02482">
    <property type="interactions" value="2423"/>
</dbReference>
<dbReference type="IntAct" id="O02482">
    <property type="interactions" value="48"/>
</dbReference>
<dbReference type="STRING" id="6239.W02D3.9.2"/>
<dbReference type="PaxDb" id="6239-W02D3.9.1"/>
<dbReference type="PeptideAtlas" id="O02482"/>
<dbReference type="EnsemblMetazoa" id="W02D3.9.1">
    <property type="protein sequence ID" value="W02D3.9.1"/>
    <property type="gene ID" value="WBGene00006773"/>
</dbReference>
<dbReference type="GeneID" id="172394"/>
<dbReference type="KEGG" id="cel:CELE_W02D3.9"/>
<dbReference type="UCSC" id="W02D3.9.2">
    <property type="organism name" value="c. elegans"/>
</dbReference>
<dbReference type="AGR" id="WB:WBGene00006773"/>
<dbReference type="CTD" id="172394"/>
<dbReference type="WormBase" id="W02D3.9">
    <property type="protein sequence ID" value="CE14434"/>
    <property type="gene ID" value="WBGene00006773"/>
    <property type="gene designation" value="unc-37"/>
</dbReference>
<dbReference type="eggNOG" id="KOG0639">
    <property type="taxonomic scope" value="Eukaryota"/>
</dbReference>
<dbReference type="GeneTree" id="ENSGT01030000234519"/>
<dbReference type="HOGENOM" id="CLU_007612_3_0_1"/>
<dbReference type="InParanoid" id="O02482"/>
<dbReference type="OMA" id="ETQHGKI"/>
<dbReference type="OrthoDB" id="2624652at2759"/>
<dbReference type="PhylomeDB" id="O02482"/>
<dbReference type="Reactome" id="R-CEL-201722">
    <property type="pathway name" value="Formation of the beta-catenin:TCF transactivating complex"/>
</dbReference>
<dbReference type="Reactome" id="R-CEL-3769402">
    <property type="pathway name" value="Deactivation of the beta-catenin transactivating complex"/>
</dbReference>
<dbReference type="Reactome" id="R-CEL-4641265">
    <property type="pathway name" value="Repression of WNT target genes"/>
</dbReference>
<dbReference type="SignaLink" id="O02482"/>
<dbReference type="PRO" id="PR:O02482"/>
<dbReference type="Proteomes" id="UP000001940">
    <property type="component" value="Chromosome I"/>
</dbReference>
<dbReference type="Bgee" id="WBGene00006773">
    <property type="expression patterns" value="Expressed in embryo and 4 other cell types or tissues"/>
</dbReference>
<dbReference type="GO" id="GO:0005634">
    <property type="term" value="C:nucleus"/>
    <property type="evidence" value="ECO:0000314"/>
    <property type="project" value="WormBase"/>
</dbReference>
<dbReference type="GO" id="GO:0045202">
    <property type="term" value="C:synapse"/>
    <property type="evidence" value="ECO:0007669"/>
    <property type="project" value="GOC"/>
</dbReference>
<dbReference type="GO" id="GO:0005667">
    <property type="term" value="C:transcription regulator complex"/>
    <property type="evidence" value="ECO:0000318"/>
    <property type="project" value="GO_Central"/>
</dbReference>
<dbReference type="GO" id="GO:0061629">
    <property type="term" value="F:RNA polymerase II-specific DNA-binding transcription factor binding"/>
    <property type="evidence" value="ECO:0000353"/>
    <property type="project" value="WormBase"/>
</dbReference>
<dbReference type="GO" id="GO:0003714">
    <property type="term" value="F:transcription corepressor activity"/>
    <property type="evidence" value="ECO:0000314"/>
    <property type="project" value="UniProtKB"/>
</dbReference>
<dbReference type="GO" id="GO:0007268">
    <property type="term" value="P:chemical synaptic transmission"/>
    <property type="evidence" value="ECO:0000315"/>
    <property type="project" value="WormBase"/>
</dbReference>
<dbReference type="GO" id="GO:0090090">
    <property type="term" value="P:negative regulation of canonical Wnt signaling pathway"/>
    <property type="evidence" value="ECO:0000315"/>
    <property type="project" value="UniProtKB"/>
</dbReference>
<dbReference type="GO" id="GO:0045892">
    <property type="term" value="P:negative regulation of DNA-templated transcription"/>
    <property type="evidence" value="ECO:0000250"/>
    <property type="project" value="WormBase"/>
</dbReference>
<dbReference type="GO" id="GO:0000122">
    <property type="term" value="P:negative regulation of transcription by RNA polymerase II"/>
    <property type="evidence" value="ECO:0000315"/>
    <property type="project" value="UniProtKB"/>
</dbReference>
<dbReference type="GO" id="GO:0050770">
    <property type="term" value="P:regulation of axonogenesis"/>
    <property type="evidence" value="ECO:0000315"/>
    <property type="project" value="WormBase"/>
</dbReference>
<dbReference type="GO" id="GO:0050807">
    <property type="term" value="P:regulation of synapse organization"/>
    <property type="evidence" value="ECO:0000315"/>
    <property type="project" value="UniProtKB"/>
</dbReference>
<dbReference type="GO" id="GO:0050803">
    <property type="term" value="P:regulation of synapse structure or activity"/>
    <property type="evidence" value="ECO:0000315"/>
    <property type="project" value="WormBase"/>
</dbReference>
<dbReference type="CDD" id="cd00200">
    <property type="entry name" value="WD40"/>
    <property type="match status" value="1"/>
</dbReference>
<dbReference type="FunFam" id="2.130.10.10:FF:001072">
    <property type="entry name" value="Transcription factor unc-37"/>
    <property type="match status" value="1"/>
</dbReference>
<dbReference type="Gene3D" id="2.130.10.10">
    <property type="entry name" value="YVTN repeat-like/Quinoprotein amine dehydrogenase"/>
    <property type="match status" value="1"/>
</dbReference>
<dbReference type="InterPro" id="IPR005617">
    <property type="entry name" value="Groucho/TLE_N"/>
</dbReference>
<dbReference type="InterPro" id="IPR009146">
    <property type="entry name" value="Groucho_enhance"/>
</dbReference>
<dbReference type="InterPro" id="IPR015943">
    <property type="entry name" value="WD40/YVTN_repeat-like_dom_sf"/>
</dbReference>
<dbReference type="InterPro" id="IPR036322">
    <property type="entry name" value="WD40_repeat_dom_sf"/>
</dbReference>
<dbReference type="InterPro" id="IPR001680">
    <property type="entry name" value="WD40_rpt"/>
</dbReference>
<dbReference type="PANTHER" id="PTHR10814:SF21">
    <property type="entry name" value="PROTEIN GROUCHO"/>
    <property type="match status" value="1"/>
</dbReference>
<dbReference type="PANTHER" id="PTHR10814">
    <property type="entry name" value="TRANSDUCIN-LIKE ENHANCER PROTEIN"/>
    <property type="match status" value="1"/>
</dbReference>
<dbReference type="Pfam" id="PF03920">
    <property type="entry name" value="TLE_N"/>
    <property type="match status" value="1"/>
</dbReference>
<dbReference type="Pfam" id="PF00400">
    <property type="entry name" value="WD40"/>
    <property type="match status" value="4"/>
</dbReference>
<dbReference type="PRINTS" id="PR01850">
    <property type="entry name" value="GROUCHOFAMLY"/>
</dbReference>
<dbReference type="SMART" id="SM00320">
    <property type="entry name" value="WD40"/>
    <property type="match status" value="7"/>
</dbReference>
<dbReference type="SUPFAM" id="SSF50978">
    <property type="entry name" value="WD40 repeat-like"/>
    <property type="match status" value="1"/>
</dbReference>
<dbReference type="PROSITE" id="PS50082">
    <property type="entry name" value="WD_REPEATS_2"/>
    <property type="match status" value="2"/>
</dbReference>
<dbReference type="PROSITE" id="PS50294">
    <property type="entry name" value="WD_REPEATS_REGION"/>
    <property type="match status" value="2"/>
</dbReference>
<comment type="function">
    <text evidence="5 6">Transcriptional corepressor that functions with the neural specificity gene unc-4 to govern motor neuron identity (PubMed:10557206, PubMed:17289921, PubMed:9165118). In concert with unc-4, represses the expression of VB-specific genes such as ceh-12, thereby preventing the adoption of VB motor neuron fate (PubMed:10557206, PubMed:17289921). May function with transcription factor mls-1 to promote uterine muscle specification and formation (PubMed:21852953).</text>
</comment>
<comment type="subunit">
    <text evidence="2 5">Interacts with unc-4 (PubMed:10557206). Interacts with ref-1 (PubMed:15935776). May interact with mls-1 (PubMed:21852953).</text>
</comment>
<comment type="interaction">
    <interactant intactId="EBI-314716">
        <id>O02482</id>
    </interactant>
    <interactant intactId="EBI-326955">
        <id>O62505</id>
        <label>CELE_ZK1053.3</label>
    </interactant>
    <organismsDiffer>false</organismsDiffer>
    <experiments>4</experiments>
</comment>
<comment type="interaction">
    <interactant intactId="EBI-314716">
        <id>O02482</id>
    </interactant>
    <interactant intactId="EBI-322161">
        <id>G5ECN8</id>
        <label>ces-1</label>
    </interactant>
    <organismsDiffer>false</organismsDiffer>
    <experiments>4</experiments>
</comment>
<comment type="interaction">
    <interactant intactId="EBI-314716">
        <id>O02482</id>
    </interactant>
    <interactant intactId="EBI-2005589">
        <id>Q93616</id>
        <label>lsy-22</label>
    </interactant>
    <organismsDiffer>false</organismsDiffer>
    <experiments>7</experiments>
</comment>
<comment type="interaction">
    <interactant intactId="EBI-314716">
        <id>O02482</id>
    </interactant>
    <interactant intactId="EBI-314697">
        <id>Q9XVV3</id>
        <label>nhr-67</label>
    </interactant>
    <organismsDiffer>false</organismsDiffer>
    <experiments>3</experiments>
</comment>
<comment type="interaction">
    <interactant intactId="EBI-314716">
        <id>O02482</id>
    </interactant>
    <interactant intactId="EBI-2416749">
        <id>G5ED66</id>
        <label>pax-3</label>
    </interactant>
    <organismsDiffer>false</organismsDiffer>
    <experiments>5</experiments>
</comment>
<comment type="interaction">
    <interactant intactId="EBI-314716">
        <id>O02482</id>
    </interactant>
    <interactant intactId="EBI-317870">
        <id>Q10666</id>
        <label>pop-1</label>
    </interactant>
    <organismsDiffer>false</organismsDiffer>
    <experiments>3</experiments>
</comment>
<comment type="interaction">
    <interactant intactId="EBI-314716">
        <id>O02482</id>
    </interactant>
    <interactant intactId="EBI-2420648">
        <id>Q22678</id>
        <label>sptf-2</label>
    </interactant>
    <organismsDiffer>false</organismsDiffer>
    <experiments>5</experiments>
</comment>
<comment type="interaction">
    <interactant intactId="EBI-314716">
        <id>O02482</id>
    </interactant>
    <interactant intactId="EBI-2414897">
        <id>Q18694</id>
        <label>unc-130</label>
    </interactant>
    <organismsDiffer>false</organismsDiffer>
    <experiments>3</experiments>
</comment>
<comment type="subcellular location">
    <subcellularLocation>
        <location evidence="7">Nucleus</location>
    </subcellularLocation>
</comment>
<comment type="disruption phenotype">
    <text evidence="3 5">Maternal effect embryonic lethal (PubMed:21852953). RNAi-mediated knockdown results in reduced uterine cell specification (PubMed:21852953). Descendants of the ABa blastomere express lag-2 ectopically (PubMed:15935776).</text>
</comment>
<comment type="similarity">
    <text evidence="7">Belongs to the WD repeat Groucho/TLE family.</text>
</comment>
<sequence>MKASYLETLDRIKDEHAEMSKHVNQQRSDIEKVALEKENMNRSYMTYAEVSNTLRSDLRKAEEINKRLQEFIMQSLAPQLSQDNQANCLAALEAFKTASPRENGNGAPALPPGFPPGAAGMLGMMPNMPFGMSPAMSQLFNQFASPHVNGGDGAGGSSGGASEAKKAKLEDPDDGELEIDVTNDDHPSTASNGGAANKNGRDSTNSVASSGASTPSIASNSRARQQQQPLAGLQGLEQMNFLAGFNPNLLRQASAAGGFNFLNDPHAQARLAAAIGQIGSRPAYSFKIVDGGVPTPTSFPPDAQKGPGIPTGLKKKMELNHGEVVCAATISRDNSRVYTGGKGCVKIWDVKESDISGATVVNRPPIASLDCLKENYIRSCKLFEDGNTLLIGGEASTVALWDLTTETKTLDLETDSQACYALAMSPDEKLLFACLADGNILIYDIHNKVKVGTLPGHQDGASCLDLSKDGTKLWSGGLDNSVRCWDLAQRKEVAKHDFASQVFSLGCCPNDEWVAVGMENNYVEVLSTTGKEKYQLTQHESCVLSLKFAHSGKFFISTGKDNALNAWRTPYGASLFQLKENSSVLSCDISFDDSLIVTGSGEKKATLYAVEY</sequence>
<gene>
    <name type="primary">unc-37</name>
    <name type="synonym">esg</name>
    <name type="ORF">W02D3.9</name>
</gene>
<proteinExistence type="evidence at protein level"/>
<evidence type="ECO:0000256" key="1">
    <source>
        <dbReference type="SAM" id="MobiDB-lite"/>
    </source>
</evidence>
<evidence type="ECO:0000269" key="2">
    <source>
    </source>
</evidence>
<evidence type="ECO:0000269" key="3">
    <source>
    </source>
</evidence>
<evidence type="ECO:0000269" key="4">
    <source>
    </source>
</evidence>
<evidence type="ECO:0000269" key="5">
    <source>
    </source>
</evidence>
<evidence type="ECO:0000269" key="6">
    <source>
    </source>
</evidence>
<evidence type="ECO:0000305" key="7"/>
<organism>
    <name type="scientific">Caenorhabditis elegans</name>
    <dbReference type="NCBI Taxonomy" id="6239"/>
    <lineage>
        <taxon>Eukaryota</taxon>
        <taxon>Metazoa</taxon>
        <taxon>Ecdysozoa</taxon>
        <taxon>Nematoda</taxon>
        <taxon>Chromadorea</taxon>
        <taxon>Rhabditida</taxon>
        <taxon>Rhabditina</taxon>
        <taxon>Rhabditomorpha</taxon>
        <taxon>Rhabditoidea</taxon>
        <taxon>Rhabditidae</taxon>
        <taxon>Peloderinae</taxon>
        <taxon>Caenorhabditis</taxon>
    </lineage>
</organism>
<protein>
    <recommendedName>
        <fullName>Transcription factor unc-37</fullName>
    </recommendedName>
    <alternativeName>
        <fullName>Uncoordinated protein 37</fullName>
    </alternativeName>
</protein>
<accession>O02482</accession>
<accession>P91912</accession>
<feature type="chain" id="PRO_0000051316" description="Transcription factor unc-37">
    <location>
        <begin position="1"/>
        <end position="612"/>
    </location>
</feature>
<feature type="repeat" description="WD 1">
    <location>
        <begin position="308"/>
        <end position="339"/>
    </location>
</feature>
<feature type="repeat" description="WD 2">
    <location>
        <begin position="372"/>
        <end position="402"/>
    </location>
</feature>
<feature type="repeat" description="WD 3">
    <location>
        <begin position="414"/>
        <end position="444"/>
    </location>
</feature>
<feature type="repeat" description="WD 4">
    <location>
        <begin position="456"/>
        <end position="486"/>
    </location>
</feature>
<feature type="repeat" description="WD 5">
    <location>
        <begin position="538"/>
        <end position="568"/>
    </location>
</feature>
<feature type="repeat" description="WD 6">
    <location>
        <begin position="579"/>
        <end position="609"/>
    </location>
</feature>
<feature type="region of interest" description="Disordered" evidence="1">
    <location>
        <begin position="143"/>
        <end position="228"/>
    </location>
</feature>
<feature type="region of interest" description="CCN domain">
    <location>
        <begin position="153"/>
        <end position="196"/>
    </location>
</feature>
<feature type="compositionally biased region" description="Gly residues" evidence="1">
    <location>
        <begin position="150"/>
        <end position="159"/>
    </location>
</feature>
<feature type="compositionally biased region" description="Acidic residues" evidence="1">
    <location>
        <begin position="171"/>
        <end position="182"/>
    </location>
</feature>
<feature type="compositionally biased region" description="Polar residues" evidence="1">
    <location>
        <begin position="202"/>
        <end position="221"/>
    </location>
</feature>
<feature type="mutagenesis site" description="In e262; movement defects, fertile. Abnormal, ectopic expression of ceh-12 in VA motor neurons. Inability to move backward is partially restored in an unc-12 mutant background. Ectopic expression of innexin unc-7 in puncta adjacent to VA motor neurons and DA class motor neurons, probably as a result of miswiring of gap junctions." evidence="4 6">
    <original>H</original>
    <variation>Y</variation>
    <location>
        <position position="539"/>
    </location>
</feature>
<feature type="sequence conflict" description="In Ref. 1; AAB49459." evidence="7" ref="1">
    <original>K</original>
    <variation>T</variation>
    <location>
        <position position="66"/>
    </location>
</feature>
<name>UNC37_CAEEL</name>